<comment type="function">
    <text evidence="1">Aux/IAA proteins are short-lived transcriptional factors that function as repressors of early auxin response genes at low auxin concentrations.</text>
</comment>
<comment type="subunit">
    <text evidence="1">Homodimers and heterodimers.</text>
</comment>
<comment type="subcellular location">
    <subcellularLocation>
        <location evidence="1">Nucleus</location>
    </subcellularLocation>
</comment>
<comment type="miscellaneous">
    <text>Lacks the EAR-like motif (domain I) which is conserved in the Aux/IAA family.</text>
</comment>
<comment type="similarity">
    <text evidence="4">Belongs to the Aux/IAA family.</text>
</comment>
<comment type="caution">
    <text evidence="4">Could be the product of a pseudogene.</text>
</comment>
<proteinExistence type="uncertain"/>
<gene>
    <name type="primary">IAA29</name>
    <name type="ordered locus">Os11g0221300</name>
    <name type="ordered locus">LOC_Os11g11430</name>
    <name type="ORF">OsJ_33398</name>
</gene>
<organism>
    <name type="scientific">Oryza sativa subsp. japonica</name>
    <name type="common">Rice</name>
    <dbReference type="NCBI Taxonomy" id="39947"/>
    <lineage>
        <taxon>Eukaryota</taxon>
        <taxon>Viridiplantae</taxon>
        <taxon>Streptophyta</taxon>
        <taxon>Embryophyta</taxon>
        <taxon>Tracheophyta</taxon>
        <taxon>Spermatophyta</taxon>
        <taxon>Magnoliopsida</taxon>
        <taxon>Liliopsida</taxon>
        <taxon>Poales</taxon>
        <taxon>Poaceae</taxon>
        <taxon>BOP clade</taxon>
        <taxon>Oryzoideae</taxon>
        <taxon>Oryzeae</taxon>
        <taxon>Oryzinae</taxon>
        <taxon>Oryza</taxon>
        <taxon>Oryza sativa</taxon>
    </lineage>
</organism>
<sequence length="171" mass="18733">MKDRNASAEPVVKPGLSPSRFVKVFMHGEPFGRKINLALHNNYDSLSFTLKKLGNNYSMSPFELEGLVNKEEDGAIDSDFDLLYDDMDGVRYFLGDVPWEVFTTTVKKIYIVPAEQQNENDYQEEEEDNAAAAATADEDGDGAAADDGVAAAADDVDDVAGYTSNDDPSFD</sequence>
<accession>P0C131</accession>
<accession>A0A0P0Y0J4</accession>
<accession>Q0ITS6</accession>
<accession>Q2R8P9</accession>
<dbReference type="EMBL" id="DP000010">
    <property type="protein sequence ID" value="ABA92106.1"/>
    <property type="molecule type" value="Genomic_DNA"/>
</dbReference>
<dbReference type="EMBL" id="AP008217">
    <property type="protein sequence ID" value="BAF27889.2"/>
    <property type="molecule type" value="Genomic_DNA"/>
</dbReference>
<dbReference type="EMBL" id="AP014967">
    <property type="protein sequence ID" value="BAT13253.1"/>
    <property type="molecule type" value="Genomic_DNA"/>
</dbReference>
<dbReference type="EMBL" id="CM000148">
    <property type="protein sequence ID" value="EAZ17848.1"/>
    <property type="molecule type" value="Genomic_DNA"/>
</dbReference>
<dbReference type="RefSeq" id="XP_015616636.1">
    <property type="nucleotide sequence ID" value="XM_015761150.1"/>
</dbReference>
<dbReference type="SMR" id="P0C131"/>
<dbReference type="FunCoup" id="P0C131">
    <property type="interactions" value="107"/>
</dbReference>
<dbReference type="PaxDb" id="39947-P0C131"/>
<dbReference type="EnsemblPlants" id="Os11t0221300-01">
    <property type="protein sequence ID" value="Os11t0221300-01"/>
    <property type="gene ID" value="Os11g0221300"/>
</dbReference>
<dbReference type="Gramene" id="Os11t0221300-01">
    <property type="protein sequence ID" value="Os11t0221300-01"/>
    <property type="gene ID" value="Os11g0221300"/>
</dbReference>
<dbReference type="KEGG" id="dosa:Os11g0221300"/>
<dbReference type="eggNOG" id="ENOG502R5WP">
    <property type="taxonomic scope" value="Eukaryota"/>
</dbReference>
<dbReference type="HOGENOM" id="CLU_117842_0_0_1"/>
<dbReference type="InParanoid" id="P0C131"/>
<dbReference type="OMA" id="RIYIVRV"/>
<dbReference type="OrthoDB" id="1900465at2759"/>
<dbReference type="Proteomes" id="UP000000763">
    <property type="component" value="Chromosome 11"/>
</dbReference>
<dbReference type="Proteomes" id="UP000007752">
    <property type="component" value="Chromosome 11"/>
</dbReference>
<dbReference type="Proteomes" id="UP000059680">
    <property type="component" value="Chromosome 11"/>
</dbReference>
<dbReference type="GO" id="GO:0005634">
    <property type="term" value="C:nucleus"/>
    <property type="evidence" value="ECO:0007669"/>
    <property type="project" value="UniProtKB-SubCell"/>
</dbReference>
<dbReference type="GO" id="GO:0009734">
    <property type="term" value="P:auxin-activated signaling pathway"/>
    <property type="evidence" value="ECO:0007669"/>
    <property type="project" value="UniProtKB-KW"/>
</dbReference>
<dbReference type="GO" id="GO:0006355">
    <property type="term" value="P:regulation of DNA-templated transcription"/>
    <property type="evidence" value="ECO:0007669"/>
    <property type="project" value="InterPro"/>
</dbReference>
<dbReference type="Gene3D" id="3.10.20.90">
    <property type="entry name" value="Phosphatidylinositol 3-kinase Catalytic Subunit, Chain A, domain 1"/>
    <property type="match status" value="1"/>
</dbReference>
<dbReference type="InterPro" id="IPR033389">
    <property type="entry name" value="AUX/IAA_dom"/>
</dbReference>
<dbReference type="InterPro" id="IPR003311">
    <property type="entry name" value="AUX_IAA"/>
</dbReference>
<dbReference type="InterPro" id="IPR053793">
    <property type="entry name" value="PB1-like"/>
</dbReference>
<dbReference type="PANTHER" id="PTHR31734">
    <property type="entry name" value="AUXIN-RESPONSIVE PROTEIN IAA17"/>
    <property type="match status" value="1"/>
</dbReference>
<dbReference type="PANTHER" id="PTHR31734:SF41">
    <property type="entry name" value="AUXIN-RESPONSIVE PROTEIN IAA28-RELATED"/>
    <property type="match status" value="1"/>
</dbReference>
<dbReference type="Pfam" id="PF02309">
    <property type="entry name" value="AUX_IAA"/>
    <property type="match status" value="1"/>
</dbReference>
<dbReference type="SUPFAM" id="SSF54277">
    <property type="entry name" value="CAD &amp; PB1 domains"/>
    <property type="match status" value="1"/>
</dbReference>
<dbReference type="PROSITE" id="PS51745">
    <property type="entry name" value="PB1"/>
    <property type="match status" value="1"/>
</dbReference>
<protein>
    <recommendedName>
        <fullName>Putative auxin-responsive protein IAA29</fullName>
    </recommendedName>
    <alternativeName>
        <fullName>Indoleacetic acid-induced protein 29</fullName>
    </alternativeName>
</protein>
<evidence type="ECO:0000250" key="1"/>
<evidence type="ECO:0000255" key="2">
    <source>
        <dbReference type="PROSITE-ProRule" id="PRU01081"/>
    </source>
</evidence>
<evidence type="ECO:0000256" key="3">
    <source>
        <dbReference type="SAM" id="MobiDB-lite"/>
    </source>
</evidence>
<evidence type="ECO:0000305" key="4"/>
<keyword id="KW-0927">Auxin signaling pathway</keyword>
<keyword id="KW-0539">Nucleus</keyword>
<keyword id="KW-1185">Reference proteome</keyword>
<keyword id="KW-0678">Repressor</keyword>
<keyword id="KW-0804">Transcription</keyword>
<keyword id="KW-0805">Transcription regulation</keyword>
<name>IAA29_ORYSJ</name>
<reference key="1">
    <citation type="journal article" date="2005" name="BMC Biol.">
        <title>The sequence of rice chromosomes 11 and 12, rich in disease resistance genes and recent gene duplications.</title>
        <authorList>
            <consortium name="The rice chromosomes 11 and 12 sequencing consortia"/>
        </authorList>
    </citation>
    <scope>NUCLEOTIDE SEQUENCE [LARGE SCALE GENOMIC DNA]</scope>
    <source>
        <strain>cv. Nipponbare</strain>
    </source>
</reference>
<reference key="2">
    <citation type="journal article" date="2005" name="Nature">
        <title>The map-based sequence of the rice genome.</title>
        <authorList>
            <consortium name="International rice genome sequencing project (IRGSP)"/>
        </authorList>
    </citation>
    <scope>NUCLEOTIDE SEQUENCE [LARGE SCALE GENOMIC DNA]</scope>
    <source>
        <strain>cv. Nipponbare</strain>
    </source>
</reference>
<reference key="3">
    <citation type="journal article" date="2008" name="Nucleic Acids Res.">
        <title>The rice annotation project database (RAP-DB): 2008 update.</title>
        <authorList>
            <consortium name="The rice annotation project (RAP)"/>
        </authorList>
    </citation>
    <scope>GENOME REANNOTATION</scope>
    <source>
        <strain>cv. Nipponbare</strain>
    </source>
</reference>
<reference key="4">
    <citation type="journal article" date="2013" name="Rice">
        <title>Improvement of the Oryza sativa Nipponbare reference genome using next generation sequence and optical map data.</title>
        <authorList>
            <person name="Kawahara Y."/>
            <person name="de la Bastide M."/>
            <person name="Hamilton J.P."/>
            <person name="Kanamori H."/>
            <person name="McCombie W.R."/>
            <person name="Ouyang S."/>
            <person name="Schwartz D.C."/>
            <person name="Tanaka T."/>
            <person name="Wu J."/>
            <person name="Zhou S."/>
            <person name="Childs K.L."/>
            <person name="Davidson R.M."/>
            <person name="Lin H."/>
            <person name="Quesada-Ocampo L."/>
            <person name="Vaillancourt B."/>
            <person name="Sakai H."/>
            <person name="Lee S.S."/>
            <person name="Kim J."/>
            <person name="Numa H."/>
            <person name="Itoh T."/>
            <person name="Buell C.R."/>
            <person name="Matsumoto T."/>
        </authorList>
    </citation>
    <scope>GENOME REANNOTATION</scope>
    <source>
        <strain>cv. Nipponbare</strain>
    </source>
</reference>
<reference key="5">
    <citation type="journal article" date="2005" name="PLoS Biol.">
        <title>The genomes of Oryza sativa: a history of duplications.</title>
        <authorList>
            <person name="Yu J."/>
            <person name="Wang J."/>
            <person name="Lin W."/>
            <person name="Li S."/>
            <person name="Li H."/>
            <person name="Zhou J."/>
            <person name="Ni P."/>
            <person name="Dong W."/>
            <person name="Hu S."/>
            <person name="Zeng C."/>
            <person name="Zhang J."/>
            <person name="Zhang Y."/>
            <person name="Li R."/>
            <person name="Xu Z."/>
            <person name="Li S."/>
            <person name="Li X."/>
            <person name="Zheng H."/>
            <person name="Cong L."/>
            <person name="Lin L."/>
            <person name="Yin J."/>
            <person name="Geng J."/>
            <person name="Li G."/>
            <person name="Shi J."/>
            <person name="Liu J."/>
            <person name="Lv H."/>
            <person name="Li J."/>
            <person name="Wang J."/>
            <person name="Deng Y."/>
            <person name="Ran L."/>
            <person name="Shi X."/>
            <person name="Wang X."/>
            <person name="Wu Q."/>
            <person name="Li C."/>
            <person name="Ren X."/>
            <person name="Wang J."/>
            <person name="Wang X."/>
            <person name="Li D."/>
            <person name="Liu D."/>
            <person name="Zhang X."/>
            <person name="Ji Z."/>
            <person name="Zhao W."/>
            <person name="Sun Y."/>
            <person name="Zhang Z."/>
            <person name="Bao J."/>
            <person name="Han Y."/>
            <person name="Dong L."/>
            <person name="Ji J."/>
            <person name="Chen P."/>
            <person name="Wu S."/>
            <person name="Liu J."/>
            <person name="Xiao Y."/>
            <person name="Bu D."/>
            <person name="Tan J."/>
            <person name="Yang L."/>
            <person name="Ye C."/>
            <person name="Zhang J."/>
            <person name="Xu J."/>
            <person name="Zhou Y."/>
            <person name="Yu Y."/>
            <person name="Zhang B."/>
            <person name="Zhuang S."/>
            <person name="Wei H."/>
            <person name="Liu B."/>
            <person name="Lei M."/>
            <person name="Yu H."/>
            <person name="Li Y."/>
            <person name="Xu H."/>
            <person name="Wei S."/>
            <person name="He X."/>
            <person name="Fang L."/>
            <person name="Zhang Z."/>
            <person name="Zhang Y."/>
            <person name="Huang X."/>
            <person name="Su Z."/>
            <person name="Tong W."/>
            <person name="Li J."/>
            <person name="Tong Z."/>
            <person name="Li S."/>
            <person name="Ye J."/>
            <person name="Wang L."/>
            <person name="Fang L."/>
            <person name="Lei T."/>
            <person name="Chen C.-S."/>
            <person name="Chen H.-C."/>
            <person name="Xu Z."/>
            <person name="Li H."/>
            <person name="Huang H."/>
            <person name="Zhang F."/>
            <person name="Xu H."/>
            <person name="Li N."/>
            <person name="Zhao C."/>
            <person name="Li S."/>
            <person name="Dong L."/>
            <person name="Huang Y."/>
            <person name="Li L."/>
            <person name="Xi Y."/>
            <person name="Qi Q."/>
            <person name="Li W."/>
            <person name="Zhang B."/>
            <person name="Hu W."/>
            <person name="Zhang Y."/>
            <person name="Tian X."/>
            <person name="Jiao Y."/>
            <person name="Liang X."/>
            <person name="Jin J."/>
            <person name="Gao L."/>
            <person name="Zheng W."/>
            <person name="Hao B."/>
            <person name="Liu S.-M."/>
            <person name="Wang W."/>
            <person name="Yuan L."/>
            <person name="Cao M."/>
            <person name="McDermott J."/>
            <person name="Samudrala R."/>
            <person name="Wang J."/>
            <person name="Wong G.K.-S."/>
            <person name="Yang H."/>
        </authorList>
    </citation>
    <scope>NUCLEOTIDE SEQUENCE [LARGE SCALE GENOMIC DNA]</scope>
    <source>
        <strain>cv. Nipponbare</strain>
    </source>
</reference>
<reference key="6">
    <citation type="journal article" date="2006" name="Funct. Integr. Genomics">
        <title>Structure and expression analysis of early auxin-responsive Aux/IAA gene family in rice (Oryza sativa).</title>
        <authorList>
            <person name="Jain M."/>
            <person name="Kaur N."/>
            <person name="Garg R."/>
            <person name="Thakur J.K."/>
            <person name="Tyagi A.K."/>
            <person name="Khurana J.P."/>
        </authorList>
    </citation>
    <scope>NOMENCLATURE</scope>
</reference>
<feature type="chain" id="PRO_0000223228" description="Putative auxin-responsive protein IAA29">
    <location>
        <begin position="1"/>
        <end position="171"/>
    </location>
</feature>
<feature type="domain" description="PB1" evidence="2">
    <location>
        <begin position="19"/>
        <end position="114"/>
    </location>
</feature>
<feature type="region of interest" description="Disordered" evidence="3">
    <location>
        <begin position="117"/>
        <end position="171"/>
    </location>
</feature>
<feature type="compositionally biased region" description="Low complexity" evidence="3">
    <location>
        <begin position="142"/>
        <end position="153"/>
    </location>
</feature>
<feature type="compositionally biased region" description="Polar residues" evidence="3">
    <location>
        <begin position="162"/>
        <end position="171"/>
    </location>
</feature>